<comment type="function">
    <text evidence="1">Catalyzes the pyruvoyl-dependent decarboxylation of aspartate to produce beta-alanine.</text>
</comment>
<comment type="catalytic activity">
    <reaction evidence="1">
        <text>L-aspartate + H(+) = beta-alanine + CO2</text>
        <dbReference type="Rhea" id="RHEA:19497"/>
        <dbReference type="ChEBI" id="CHEBI:15378"/>
        <dbReference type="ChEBI" id="CHEBI:16526"/>
        <dbReference type="ChEBI" id="CHEBI:29991"/>
        <dbReference type="ChEBI" id="CHEBI:57966"/>
        <dbReference type="EC" id="4.1.1.11"/>
    </reaction>
</comment>
<comment type="cofactor">
    <cofactor evidence="1">
        <name>pyruvate</name>
        <dbReference type="ChEBI" id="CHEBI:15361"/>
    </cofactor>
    <text evidence="1">Binds 1 pyruvoyl group covalently per subunit.</text>
</comment>
<comment type="pathway">
    <text evidence="1">Cofactor biosynthesis; (R)-pantothenate biosynthesis; beta-alanine from L-aspartate: step 1/1.</text>
</comment>
<comment type="subunit">
    <text evidence="1">Heterooctamer of four alpha and four beta subunits.</text>
</comment>
<comment type="subcellular location">
    <subcellularLocation>
        <location evidence="1">Cytoplasm</location>
    </subcellularLocation>
</comment>
<comment type="PTM">
    <text evidence="1">Is synthesized initially as an inactive proenzyme, which is activated by self-cleavage at a specific serine bond to produce a beta-subunit with a hydroxyl group at its C-terminus and an alpha-subunit with a pyruvoyl group at its N-terminus.</text>
</comment>
<comment type="similarity">
    <text evidence="1">Belongs to the PanD family.</text>
</comment>
<feature type="chain" id="PRO_1000124747" description="Aspartate 1-decarboxylase beta chain" evidence="1">
    <location>
        <begin position="1"/>
        <end position="24"/>
    </location>
</feature>
<feature type="chain" id="PRO_1000124748" description="Aspartate 1-decarboxylase alpha chain" evidence="1">
    <location>
        <begin position="25"/>
        <end position="127"/>
    </location>
</feature>
<feature type="active site" description="Schiff-base intermediate with substrate; via pyruvic acid" evidence="1">
    <location>
        <position position="25"/>
    </location>
</feature>
<feature type="active site" description="Proton donor" evidence="1">
    <location>
        <position position="58"/>
    </location>
</feature>
<feature type="binding site" evidence="1">
    <location>
        <position position="57"/>
    </location>
    <ligand>
        <name>substrate</name>
    </ligand>
</feature>
<feature type="binding site" evidence="1">
    <location>
        <begin position="73"/>
        <end position="75"/>
    </location>
    <ligand>
        <name>substrate</name>
    </ligand>
</feature>
<feature type="modified residue" description="Pyruvic acid (Ser)" evidence="1">
    <location>
        <position position="25"/>
    </location>
</feature>
<organism>
    <name type="scientific">Bacillus cereus (strain AH820)</name>
    <dbReference type="NCBI Taxonomy" id="405535"/>
    <lineage>
        <taxon>Bacteria</taxon>
        <taxon>Bacillati</taxon>
        <taxon>Bacillota</taxon>
        <taxon>Bacilli</taxon>
        <taxon>Bacillales</taxon>
        <taxon>Bacillaceae</taxon>
        <taxon>Bacillus</taxon>
        <taxon>Bacillus cereus group</taxon>
    </lineage>
</organism>
<proteinExistence type="inferred from homology"/>
<evidence type="ECO:0000255" key="1">
    <source>
        <dbReference type="HAMAP-Rule" id="MF_00446"/>
    </source>
</evidence>
<sequence>MFRTMMRAKLHRATVTEANLNYVGSITIDEDLMDAVNIVENEKVQIVNNNNGARLETYVIKGERGSGVVCLNGAAARLVQPGDKVIIICYGLVAEENIHKQEPKIAVLDDDNQIIEMLGAEKAGTIL</sequence>
<name>PAND_BACC0</name>
<keyword id="KW-0068">Autocatalytic cleavage</keyword>
<keyword id="KW-0963">Cytoplasm</keyword>
<keyword id="KW-0210">Decarboxylase</keyword>
<keyword id="KW-0456">Lyase</keyword>
<keyword id="KW-0566">Pantothenate biosynthesis</keyword>
<keyword id="KW-0670">Pyruvate</keyword>
<keyword id="KW-0704">Schiff base</keyword>
<keyword id="KW-0865">Zymogen</keyword>
<accession>B7JHQ8</accession>
<reference key="1">
    <citation type="submission" date="2008-10" db="EMBL/GenBank/DDBJ databases">
        <title>Genome sequence of Bacillus cereus AH820.</title>
        <authorList>
            <person name="Dodson R.J."/>
            <person name="Durkin A.S."/>
            <person name="Rosovitz M.J."/>
            <person name="Rasko D.A."/>
            <person name="Hoffmaster A."/>
            <person name="Ravel J."/>
            <person name="Sutton G."/>
        </authorList>
    </citation>
    <scope>NUCLEOTIDE SEQUENCE [LARGE SCALE GENOMIC DNA]</scope>
    <source>
        <strain>AH820</strain>
    </source>
</reference>
<gene>
    <name evidence="1" type="primary">panD</name>
    <name type="ordered locus">BCAH820_1635</name>
</gene>
<dbReference type="EC" id="4.1.1.11" evidence="1"/>
<dbReference type="EMBL" id="CP001283">
    <property type="protein sequence ID" value="ACK89949.1"/>
    <property type="molecule type" value="Genomic_DNA"/>
</dbReference>
<dbReference type="RefSeq" id="WP_000490176.1">
    <property type="nucleotide sequence ID" value="NC_011773.1"/>
</dbReference>
<dbReference type="SMR" id="B7JHQ8"/>
<dbReference type="GeneID" id="75084853"/>
<dbReference type="KEGG" id="bcu:BCAH820_1635"/>
<dbReference type="HOGENOM" id="CLU_115305_2_0_9"/>
<dbReference type="UniPathway" id="UPA00028">
    <property type="reaction ID" value="UER00002"/>
</dbReference>
<dbReference type="Proteomes" id="UP000001363">
    <property type="component" value="Chromosome"/>
</dbReference>
<dbReference type="GO" id="GO:0005829">
    <property type="term" value="C:cytosol"/>
    <property type="evidence" value="ECO:0007669"/>
    <property type="project" value="TreeGrafter"/>
</dbReference>
<dbReference type="GO" id="GO:0004068">
    <property type="term" value="F:aspartate 1-decarboxylase activity"/>
    <property type="evidence" value="ECO:0007669"/>
    <property type="project" value="UniProtKB-UniRule"/>
</dbReference>
<dbReference type="GO" id="GO:0006523">
    <property type="term" value="P:alanine biosynthetic process"/>
    <property type="evidence" value="ECO:0007669"/>
    <property type="project" value="InterPro"/>
</dbReference>
<dbReference type="GO" id="GO:0015940">
    <property type="term" value="P:pantothenate biosynthetic process"/>
    <property type="evidence" value="ECO:0007669"/>
    <property type="project" value="UniProtKB-UniRule"/>
</dbReference>
<dbReference type="CDD" id="cd06919">
    <property type="entry name" value="Asp_decarbox"/>
    <property type="match status" value="1"/>
</dbReference>
<dbReference type="Gene3D" id="2.40.40.20">
    <property type="match status" value="1"/>
</dbReference>
<dbReference type="HAMAP" id="MF_00446">
    <property type="entry name" value="PanD"/>
    <property type="match status" value="1"/>
</dbReference>
<dbReference type="InterPro" id="IPR009010">
    <property type="entry name" value="Asp_de-COase-like_dom_sf"/>
</dbReference>
<dbReference type="InterPro" id="IPR003190">
    <property type="entry name" value="Asp_decarbox"/>
</dbReference>
<dbReference type="NCBIfam" id="TIGR00223">
    <property type="entry name" value="panD"/>
    <property type="match status" value="1"/>
</dbReference>
<dbReference type="PANTHER" id="PTHR21012">
    <property type="entry name" value="ASPARTATE 1-DECARBOXYLASE"/>
    <property type="match status" value="1"/>
</dbReference>
<dbReference type="PANTHER" id="PTHR21012:SF0">
    <property type="entry name" value="ASPARTATE 1-DECARBOXYLASE"/>
    <property type="match status" value="1"/>
</dbReference>
<dbReference type="Pfam" id="PF02261">
    <property type="entry name" value="Asp_decarbox"/>
    <property type="match status" value="1"/>
</dbReference>
<dbReference type="PIRSF" id="PIRSF006246">
    <property type="entry name" value="Asp_decarbox"/>
    <property type="match status" value="1"/>
</dbReference>
<dbReference type="SUPFAM" id="SSF50692">
    <property type="entry name" value="ADC-like"/>
    <property type="match status" value="1"/>
</dbReference>
<protein>
    <recommendedName>
        <fullName evidence="1">Aspartate 1-decarboxylase</fullName>
        <ecNumber evidence="1">4.1.1.11</ecNumber>
    </recommendedName>
    <alternativeName>
        <fullName evidence="1">Aspartate alpha-decarboxylase</fullName>
    </alternativeName>
    <component>
        <recommendedName>
            <fullName evidence="1">Aspartate 1-decarboxylase beta chain</fullName>
        </recommendedName>
    </component>
    <component>
        <recommendedName>
            <fullName evidence="1">Aspartate 1-decarboxylase alpha chain</fullName>
        </recommendedName>
    </component>
</protein>